<organism>
    <name type="scientific">Methylococcus capsulatus (strain ATCC 33009 / NCIMB 11132 / Bath)</name>
    <dbReference type="NCBI Taxonomy" id="243233"/>
    <lineage>
        <taxon>Bacteria</taxon>
        <taxon>Pseudomonadati</taxon>
        <taxon>Pseudomonadota</taxon>
        <taxon>Gammaproteobacteria</taxon>
        <taxon>Methylococcales</taxon>
        <taxon>Methylococcaceae</taxon>
        <taxon>Methylococcus</taxon>
    </lineage>
</organism>
<accession>Q606D8</accession>
<keyword id="KW-0028">Amino-acid biosynthesis</keyword>
<keyword id="KW-0055">Arginine biosynthesis</keyword>
<keyword id="KW-0963">Cytoplasm</keyword>
<keyword id="KW-1185">Reference proteome</keyword>
<keyword id="KW-0808">Transferase</keyword>
<dbReference type="EC" id="2.1.3.3" evidence="2"/>
<dbReference type="EMBL" id="AE017282">
    <property type="protein sequence ID" value="AAU91943.1"/>
    <property type="molecule type" value="Genomic_DNA"/>
</dbReference>
<dbReference type="RefSeq" id="WP_010961323.1">
    <property type="nucleotide sequence ID" value="NC_002977.6"/>
</dbReference>
<dbReference type="SMR" id="Q606D8"/>
<dbReference type="STRING" id="243233.MCA2080"/>
<dbReference type="GeneID" id="88224305"/>
<dbReference type="KEGG" id="mca:MCA2080"/>
<dbReference type="eggNOG" id="COG0078">
    <property type="taxonomic scope" value="Bacteria"/>
</dbReference>
<dbReference type="HOGENOM" id="CLU_043846_3_2_6"/>
<dbReference type="UniPathway" id="UPA00068">
    <property type="reaction ID" value="UER00112"/>
</dbReference>
<dbReference type="Proteomes" id="UP000006821">
    <property type="component" value="Chromosome"/>
</dbReference>
<dbReference type="GO" id="GO:0005737">
    <property type="term" value="C:cytoplasm"/>
    <property type="evidence" value="ECO:0007669"/>
    <property type="project" value="UniProtKB-SubCell"/>
</dbReference>
<dbReference type="GO" id="GO:0016597">
    <property type="term" value="F:amino acid binding"/>
    <property type="evidence" value="ECO:0007669"/>
    <property type="project" value="InterPro"/>
</dbReference>
<dbReference type="GO" id="GO:0004585">
    <property type="term" value="F:ornithine carbamoyltransferase activity"/>
    <property type="evidence" value="ECO:0007669"/>
    <property type="project" value="UniProtKB-UniRule"/>
</dbReference>
<dbReference type="GO" id="GO:0042450">
    <property type="term" value="P:arginine biosynthetic process via ornithine"/>
    <property type="evidence" value="ECO:0007669"/>
    <property type="project" value="TreeGrafter"/>
</dbReference>
<dbReference type="GO" id="GO:0019240">
    <property type="term" value="P:citrulline biosynthetic process"/>
    <property type="evidence" value="ECO:0007669"/>
    <property type="project" value="TreeGrafter"/>
</dbReference>
<dbReference type="GO" id="GO:0006526">
    <property type="term" value="P:L-arginine biosynthetic process"/>
    <property type="evidence" value="ECO:0007669"/>
    <property type="project" value="UniProtKB-UniRule"/>
</dbReference>
<dbReference type="FunFam" id="3.40.50.1370:FF:000008">
    <property type="entry name" value="Ornithine carbamoyltransferase"/>
    <property type="match status" value="1"/>
</dbReference>
<dbReference type="Gene3D" id="3.40.50.1370">
    <property type="entry name" value="Aspartate/ornithine carbamoyltransferase"/>
    <property type="match status" value="2"/>
</dbReference>
<dbReference type="HAMAP" id="MF_01109">
    <property type="entry name" value="OTCase"/>
    <property type="match status" value="1"/>
</dbReference>
<dbReference type="InterPro" id="IPR006132">
    <property type="entry name" value="Asp/Orn_carbamoyltranf_P-bd"/>
</dbReference>
<dbReference type="InterPro" id="IPR006130">
    <property type="entry name" value="Asp/Orn_carbamoylTrfase"/>
</dbReference>
<dbReference type="InterPro" id="IPR036901">
    <property type="entry name" value="Asp/Orn_carbamoylTrfase_sf"/>
</dbReference>
<dbReference type="InterPro" id="IPR006131">
    <property type="entry name" value="Asp_carbamoyltransf_Asp/Orn-bd"/>
</dbReference>
<dbReference type="InterPro" id="IPR002292">
    <property type="entry name" value="Orn/put_carbamltrans"/>
</dbReference>
<dbReference type="InterPro" id="IPR024904">
    <property type="entry name" value="OTCase_ArgI"/>
</dbReference>
<dbReference type="NCBIfam" id="TIGR00658">
    <property type="entry name" value="orni_carb_tr"/>
    <property type="match status" value="1"/>
</dbReference>
<dbReference type="NCBIfam" id="NF001986">
    <property type="entry name" value="PRK00779.1"/>
    <property type="match status" value="1"/>
</dbReference>
<dbReference type="PANTHER" id="PTHR45753">
    <property type="entry name" value="ORNITHINE CARBAMOYLTRANSFERASE, MITOCHONDRIAL"/>
    <property type="match status" value="1"/>
</dbReference>
<dbReference type="PANTHER" id="PTHR45753:SF3">
    <property type="entry name" value="ORNITHINE TRANSCARBAMYLASE, MITOCHONDRIAL"/>
    <property type="match status" value="1"/>
</dbReference>
<dbReference type="Pfam" id="PF00185">
    <property type="entry name" value="OTCace"/>
    <property type="match status" value="1"/>
</dbReference>
<dbReference type="Pfam" id="PF02729">
    <property type="entry name" value="OTCace_N"/>
    <property type="match status" value="1"/>
</dbReference>
<dbReference type="PRINTS" id="PR00100">
    <property type="entry name" value="AOTCASE"/>
</dbReference>
<dbReference type="PRINTS" id="PR00102">
    <property type="entry name" value="OTCASE"/>
</dbReference>
<dbReference type="SUPFAM" id="SSF53671">
    <property type="entry name" value="Aspartate/ornithine carbamoyltransferase"/>
    <property type="match status" value="1"/>
</dbReference>
<dbReference type="PROSITE" id="PS00097">
    <property type="entry name" value="CARBAMOYLTRANSFERASE"/>
    <property type="match status" value="1"/>
</dbReference>
<protein>
    <recommendedName>
        <fullName evidence="2">Ornithine carbamoyltransferase</fullName>
        <shortName evidence="2">OTCase</shortName>
        <ecNumber evidence="2">2.1.3.3</ecNumber>
    </recommendedName>
</protein>
<feature type="chain" id="PRO_1000065098" description="Ornithine carbamoyltransferase">
    <location>
        <begin position="1"/>
        <end position="298"/>
    </location>
</feature>
<feature type="binding site" evidence="2">
    <location>
        <begin position="50"/>
        <end position="53"/>
    </location>
    <ligand>
        <name>carbamoyl phosphate</name>
        <dbReference type="ChEBI" id="CHEBI:58228"/>
    </ligand>
</feature>
<feature type="binding site" evidence="2">
    <location>
        <position position="77"/>
    </location>
    <ligand>
        <name>carbamoyl phosphate</name>
        <dbReference type="ChEBI" id="CHEBI:58228"/>
    </ligand>
</feature>
<feature type="binding site" evidence="2">
    <location>
        <position position="101"/>
    </location>
    <ligand>
        <name>carbamoyl phosphate</name>
        <dbReference type="ChEBI" id="CHEBI:58228"/>
    </ligand>
</feature>
<feature type="binding site" evidence="2">
    <location>
        <begin position="128"/>
        <end position="131"/>
    </location>
    <ligand>
        <name>carbamoyl phosphate</name>
        <dbReference type="ChEBI" id="CHEBI:58228"/>
    </ligand>
</feature>
<feature type="binding site" evidence="2">
    <location>
        <position position="159"/>
    </location>
    <ligand>
        <name>L-ornithine</name>
        <dbReference type="ChEBI" id="CHEBI:46911"/>
    </ligand>
</feature>
<feature type="binding site" evidence="2">
    <location>
        <position position="216"/>
    </location>
    <ligand>
        <name>L-ornithine</name>
        <dbReference type="ChEBI" id="CHEBI:46911"/>
    </ligand>
</feature>
<feature type="binding site" evidence="2">
    <location>
        <begin position="220"/>
        <end position="221"/>
    </location>
    <ligand>
        <name>L-ornithine</name>
        <dbReference type="ChEBI" id="CHEBI:46911"/>
    </ligand>
</feature>
<feature type="binding site" evidence="2">
    <location>
        <begin position="256"/>
        <end position="257"/>
    </location>
    <ligand>
        <name>carbamoyl phosphate</name>
        <dbReference type="ChEBI" id="CHEBI:58228"/>
    </ligand>
</feature>
<feature type="binding site" evidence="2">
    <location>
        <position position="284"/>
    </location>
    <ligand>
        <name>carbamoyl phosphate</name>
        <dbReference type="ChEBI" id="CHEBI:58228"/>
    </ligand>
</feature>
<evidence type="ECO:0000250" key="1"/>
<evidence type="ECO:0000255" key="2">
    <source>
        <dbReference type="HAMAP-Rule" id="MF_01109"/>
    </source>
</evidence>
<gene>
    <name evidence="2" type="primary">argF</name>
    <name type="ordered locus">MCA2080</name>
</gene>
<name>OTC_METCA</name>
<reference key="1">
    <citation type="journal article" date="2004" name="PLoS Biol.">
        <title>Genomic insights into methanotrophy: the complete genome sequence of Methylococcus capsulatus (Bath).</title>
        <authorList>
            <person name="Ward N.L."/>
            <person name="Larsen O."/>
            <person name="Sakwa J."/>
            <person name="Bruseth L."/>
            <person name="Khouri H.M."/>
            <person name="Durkin A.S."/>
            <person name="Dimitrov G."/>
            <person name="Jiang L."/>
            <person name="Scanlan D."/>
            <person name="Kang K.H."/>
            <person name="Lewis M.R."/>
            <person name="Nelson K.E."/>
            <person name="Methe B.A."/>
            <person name="Wu M."/>
            <person name="Heidelberg J.F."/>
            <person name="Paulsen I.T."/>
            <person name="Fouts D.E."/>
            <person name="Ravel J."/>
            <person name="Tettelin H."/>
            <person name="Ren Q."/>
            <person name="Read T.D."/>
            <person name="DeBoy R.T."/>
            <person name="Seshadri R."/>
            <person name="Salzberg S.L."/>
            <person name="Jensen H.B."/>
            <person name="Birkeland N.K."/>
            <person name="Nelson W.C."/>
            <person name="Dodson R.J."/>
            <person name="Grindhaug S.H."/>
            <person name="Holt I.E."/>
            <person name="Eidhammer I."/>
            <person name="Jonasen I."/>
            <person name="Vanaken S."/>
            <person name="Utterback T.R."/>
            <person name="Feldblyum T.V."/>
            <person name="Fraser C.M."/>
            <person name="Lillehaug J.R."/>
            <person name="Eisen J.A."/>
        </authorList>
    </citation>
    <scope>NUCLEOTIDE SEQUENCE [LARGE SCALE GENOMIC DNA]</scope>
    <source>
        <strain>ATCC 33009 / NCIMB 11132 / Bath</strain>
    </source>
</reference>
<sequence length="298" mass="33128">MKPRHFVTLRDLSSAEFRALIARAIDLKARKEPYEPLKNKVLGMVFEKSSTRTRVSFEVGMAQFGGSSIFLSPRDTQLGRGEPIEDSARVLSRMVDCIMLRTHAHRTVEIFAEYSRVPVINGLTDRFHPCQLLADMQTYFEHRGDIAGKTVAWIGDGNNMCQTYVHAAGLLDFRLRIACPPGYEPEAELVEAAGKCVEVGHDVRTAVNGADLVVTDVWASMGQESEQTERTGAFRDYQVNAALMALAHADALFMHCLPAHRGEEVSAEVLEGPQSVVWDEAENRLHAQKALLEFLLTA</sequence>
<proteinExistence type="inferred from homology"/>
<comment type="function">
    <text evidence="1">Reversibly catalyzes the transfer of the carbamoyl group from carbamoyl phosphate (CP) to the N(epsilon) atom of ornithine (ORN) to produce L-citrulline.</text>
</comment>
<comment type="catalytic activity">
    <reaction evidence="2">
        <text>carbamoyl phosphate + L-ornithine = L-citrulline + phosphate + H(+)</text>
        <dbReference type="Rhea" id="RHEA:19513"/>
        <dbReference type="ChEBI" id="CHEBI:15378"/>
        <dbReference type="ChEBI" id="CHEBI:43474"/>
        <dbReference type="ChEBI" id="CHEBI:46911"/>
        <dbReference type="ChEBI" id="CHEBI:57743"/>
        <dbReference type="ChEBI" id="CHEBI:58228"/>
        <dbReference type="EC" id="2.1.3.3"/>
    </reaction>
</comment>
<comment type="pathway">
    <text evidence="2">Amino-acid biosynthesis; L-arginine biosynthesis; L-arginine from L-ornithine and carbamoyl phosphate: step 1/3.</text>
</comment>
<comment type="subcellular location">
    <subcellularLocation>
        <location evidence="2">Cytoplasm</location>
    </subcellularLocation>
</comment>
<comment type="similarity">
    <text evidence="2">Belongs to the aspartate/ornithine carbamoyltransferase superfamily. OTCase family.</text>
</comment>